<keyword id="KW-0119">Carbohydrate metabolism</keyword>
<keyword id="KW-0963">Cytoplasm</keyword>
<keyword id="KW-0413">Isomerase</keyword>
<keyword id="KW-1185">Reference proteome</keyword>
<keyword id="KW-0684">Rhamnose metabolism</keyword>
<comment type="function">
    <text evidence="1">Involved in the anomeric conversion of L-rhamnose.</text>
</comment>
<comment type="catalytic activity">
    <reaction evidence="1">
        <text>alpha-L-rhamnose = beta-L-rhamnose</text>
        <dbReference type="Rhea" id="RHEA:25584"/>
        <dbReference type="ChEBI" id="CHEBI:27586"/>
        <dbReference type="ChEBI" id="CHEBI:27907"/>
        <dbReference type="EC" id="5.1.3.32"/>
    </reaction>
</comment>
<comment type="pathway">
    <text evidence="1">Carbohydrate metabolism; L-rhamnose metabolism.</text>
</comment>
<comment type="subunit">
    <text evidence="1">Homodimer.</text>
</comment>
<comment type="subcellular location">
    <subcellularLocation>
        <location evidence="1">Cytoplasm</location>
    </subcellularLocation>
</comment>
<comment type="similarity">
    <text evidence="1">Belongs to the rhamnose mutarotase family.</text>
</comment>
<reference key="1">
    <citation type="submission" date="2008-03" db="EMBL/GenBank/DDBJ databases">
        <title>Complete sequence of Leptothrix cholodnii SP-6.</title>
        <authorList>
            <consortium name="US DOE Joint Genome Institute"/>
            <person name="Copeland A."/>
            <person name="Lucas S."/>
            <person name="Lapidus A."/>
            <person name="Glavina del Rio T."/>
            <person name="Dalin E."/>
            <person name="Tice H."/>
            <person name="Bruce D."/>
            <person name="Goodwin L."/>
            <person name="Pitluck S."/>
            <person name="Chertkov O."/>
            <person name="Brettin T."/>
            <person name="Detter J.C."/>
            <person name="Han C."/>
            <person name="Kuske C.R."/>
            <person name="Schmutz J."/>
            <person name="Larimer F."/>
            <person name="Land M."/>
            <person name="Hauser L."/>
            <person name="Kyrpides N."/>
            <person name="Lykidis A."/>
            <person name="Emerson D."/>
            <person name="Richardson P."/>
        </authorList>
    </citation>
    <scope>NUCLEOTIDE SEQUENCE [LARGE SCALE GENOMIC DNA]</scope>
    <source>
        <strain>ATCC 51168 / LMG 8142 / SP-6</strain>
    </source>
</reference>
<name>RHAM_LEPCP</name>
<organism>
    <name type="scientific">Leptothrix cholodnii (strain ATCC 51168 / LMG 8142 / SP-6)</name>
    <name type="common">Leptothrix discophora (strain SP-6)</name>
    <dbReference type="NCBI Taxonomy" id="395495"/>
    <lineage>
        <taxon>Bacteria</taxon>
        <taxon>Pseudomonadati</taxon>
        <taxon>Pseudomonadota</taxon>
        <taxon>Betaproteobacteria</taxon>
        <taxon>Burkholderiales</taxon>
        <taxon>Sphaerotilaceae</taxon>
        <taxon>Leptothrix</taxon>
    </lineage>
</organism>
<feature type="chain" id="PRO_0000344584" description="L-rhamnose mutarotase">
    <location>
        <begin position="1"/>
        <end position="106"/>
    </location>
</feature>
<feature type="active site" description="Proton donor" evidence="1">
    <location>
        <position position="24"/>
    </location>
</feature>
<feature type="binding site" evidence="1">
    <location>
        <position position="20"/>
    </location>
    <ligand>
        <name>substrate</name>
    </ligand>
</feature>
<feature type="binding site" evidence="1">
    <location>
        <position position="43"/>
    </location>
    <ligand>
        <name>substrate</name>
    </ligand>
</feature>
<feature type="binding site" evidence="1">
    <location>
        <begin position="78"/>
        <end position="79"/>
    </location>
    <ligand>
        <name>substrate</name>
    </ligand>
</feature>
<sequence length="106" mass="12291">MTTEKIAFRMFLNPGCEAEYQLRHDRIWPELVALLKNSGVSDYSIFLDEPRGVLFAVLSRSPGHTMQTLPQHPVMQRWWQHMKDIMRCNPDGSPVAEPLPCLFHLD</sequence>
<gene>
    <name evidence="1" type="primary">rhaM</name>
    <name type="ordered locus">Lcho_2208</name>
</gene>
<evidence type="ECO:0000255" key="1">
    <source>
        <dbReference type="HAMAP-Rule" id="MF_01663"/>
    </source>
</evidence>
<dbReference type="EC" id="5.1.3.32" evidence="1"/>
<dbReference type="EMBL" id="CP001013">
    <property type="protein sequence ID" value="ACB34474.1"/>
    <property type="molecule type" value="Genomic_DNA"/>
</dbReference>
<dbReference type="RefSeq" id="WP_012347234.1">
    <property type="nucleotide sequence ID" value="NC_010524.1"/>
</dbReference>
<dbReference type="SMR" id="B1Y3E6"/>
<dbReference type="STRING" id="395495.Lcho_2208"/>
<dbReference type="KEGG" id="lch:Lcho_2208"/>
<dbReference type="eggNOG" id="COG3254">
    <property type="taxonomic scope" value="Bacteria"/>
</dbReference>
<dbReference type="HOGENOM" id="CLU_100689_2_0_4"/>
<dbReference type="OrthoDB" id="9799608at2"/>
<dbReference type="UniPathway" id="UPA00125"/>
<dbReference type="Proteomes" id="UP000001693">
    <property type="component" value="Chromosome"/>
</dbReference>
<dbReference type="GO" id="GO:0005737">
    <property type="term" value="C:cytoplasm"/>
    <property type="evidence" value="ECO:0007669"/>
    <property type="project" value="UniProtKB-SubCell"/>
</dbReference>
<dbReference type="GO" id="GO:0062192">
    <property type="term" value="F:L-rhamnose mutarotase activity"/>
    <property type="evidence" value="ECO:0007669"/>
    <property type="project" value="UniProtKB-EC"/>
</dbReference>
<dbReference type="GO" id="GO:0019301">
    <property type="term" value="P:rhamnose catabolic process"/>
    <property type="evidence" value="ECO:0007669"/>
    <property type="project" value="TreeGrafter"/>
</dbReference>
<dbReference type="Gene3D" id="3.30.70.100">
    <property type="match status" value="1"/>
</dbReference>
<dbReference type="HAMAP" id="MF_01663">
    <property type="entry name" value="L_rham_rotase"/>
    <property type="match status" value="1"/>
</dbReference>
<dbReference type="InterPro" id="IPR011008">
    <property type="entry name" value="Dimeric_a/b-barrel"/>
</dbReference>
<dbReference type="InterPro" id="IPR013448">
    <property type="entry name" value="L-rhamnose_mutarotase"/>
</dbReference>
<dbReference type="InterPro" id="IPR008000">
    <property type="entry name" value="Rham/fucose_mutarotase"/>
</dbReference>
<dbReference type="NCBIfam" id="TIGR02625">
    <property type="entry name" value="YiiL_rotase"/>
    <property type="match status" value="1"/>
</dbReference>
<dbReference type="PANTHER" id="PTHR34389">
    <property type="entry name" value="L-RHAMNOSE MUTAROTASE"/>
    <property type="match status" value="1"/>
</dbReference>
<dbReference type="PANTHER" id="PTHR34389:SF2">
    <property type="entry name" value="L-RHAMNOSE MUTAROTASE"/>
    <property type="match status" value="1"/>
</dbReference>
<dbReference type="Pfam" id="PF05336">
    <property type="entry name" value="rhaM"/>
    <property type="match status" value="1"/>
</dbReference>
<dbReference type="SUPFAM" id="SSF54909">
    <property type="entry name" value="Dimeric alpha+beta barrel"/>
    <property type="match status" value="1"/>
</dbReference>
<accession>B1Y3E6</accession>
<protein>
    <recommendedName>
        <fullName evidence="1">L-rhamnose mutarotase</fullName>
        <ecNumber evidence="1">5.1.3.32</ecNumber>
    </recommendedName>
    <alternativeName>
        <fullName evidence="1">Rhamnose 1-epimerase</fullName>
    </alternativeName>
    <alternativeName>
        <fullName evidence="1">Type-3 mutarotase</fullName>
    </alternativeName>
</protein>
<proteinExistence type="inferred from homology"/>